<organism>
    <name type="scientific">Shouchella clausii (strain KSM-K16)</name>
    <name type="common">Alkalihalobacillus clausii</name>
    <dbReference type="NCBI Taxonomy" id="66692"/>
    <lineage>
        <taxon>Bacteria</taxon>
        <taxon>Bacillati</taxon>
        <taxon>Bacillota</taxon>
        <taxon>Bacilli</taxon>
        <taxon>Bacillales</taxon>
        <taxon>Bacillaceae</taxon>
        <taxon>Shouchella</taxon>
    </lineage>
</organism>
<reference key="1">
    <citation type="submission" date="2003-10" db="EMBL/GenBank/DDBJ databases">
        <title>The complete genome sequence of the alkaliphilic Bacillus clausii KSM-K16.</title>
        <authorList>
            <person name="Takaki Y."/>
            <person name="Kageyama Y."/>
            <person name="Shimamura S."/>
            <person name="Suzuki H."/>
            <person name="Nishi S."/>
            <person name="Hatada Y."/>
            <person name="Kawai S."/>
            <person name="Ito S."/>
            <person name="Horikoshi K."/>
        </authorList>
    </citation>
    <scope>NUCLEOTIDE SEQUENCE [LARGE SCALE GENOMIC DNA]</scope>
    <source>
        <strain>KSM-K16</strain>
    </source>
</reference>
<accession>Q5WLP4</accession>
<feature type="chain" id="PRO_0000273744" description="Large ribosomal subunit protein uL30">
    <location>
        <begin position="1"/>
        <end position="62"/>
    </location>
</feature>
<evidence type="ECO:0000255" key="1">
    <source>
        <dbReference type="HAMAP-Rule" id="MF_01371"/>
    </source>
</evidence>
<evidence type="ECO:0000305" key="2"/>
<gene>
    <name evidence="1" type="primary">rpmD</name>
    <name type="ordered locus">ABC0168</name>
</gene>
<proteinExistence type="inferred from homology"/>
<name>RL30_SHOC1</name>
<protein>
    <recommendedName>
        <fullName evidence="1">Large ribosomal subunit protein uL30</fullName>
    </recommendedName>
    <alternativeName>
        <fullName evidence="2">50S ribosomal protein L30</fullName>
    </alternativeName>
</protein>
<sequence length="62" mass="6935">MAKKLEITLTRSLIGRPSDQRVTVNTLGLRKLHQTVVQEDNAAIRGMVNKVKHLITVNEIDA</sequence>
<dbReference type="EMBL" id="AP006627">
    <property type="protein sequence ID" value="BAD62711.1"/>
    <property type="molecule type" value="Genomic_DNA"/>
</dbReference>
<dbReference type="RefSeq" id="WP_011245032.1">
    <property type="nucleotide sequence ID" value="NC_006582.1"/>
</dbReference>
<dbReference type="SMR" id="Q5WLP4"/>
<dbReference type="STRING" id="66692.ABC0168"/>
<dbReference type="GeneID" id="86924204"/>
<dbReference type="KEGG" id="bcl:ABC0168"/>
<dbReference type="eggNOG" id="COG1841">
    <property type="taxonomic scope" value="Bacteria"/>
</dbReference>
<dbReference type="HOGENOM" id="CLU_131047_2_1_9"/>
<dbReference type="OrthoDB" id="9812790at2"/>
<dbReference type="Proteomes" id="UP000001168">
    <property type="component" value="Chromosome"/>
</dbReference>
<dbReference type="GO" id="GO:0022625">
    <property type="term" value="C:cytosolic large ribosomal subunit"/>
    <property type="evidence" value="ECO:0007669"/>
    <property type="project" value="TreeGrafter"/>
</dbReference>
<dbReference type="GO" id="GO:0003735">
    <property type="term" value="F:structural constituent of ribosome"/>
    <property type="evidence" value="ECO:0007669"/>
    <property type="project" value="InterPro"/>
</dbReference>
<dbReference type="GO" id="GO:0006412">
    <property type="term" value="P:translation"/>
    <property type="evidence" value="ECO:0007669"/>
    <property type="project" value="UniProtKB-UniRule"/>
</dbReference>
<dbReference type="CDD" id="cd01658">
    <property type="entry name" value="Ribosomal_L30"/>
    <property type="match status" value="1"/>
</dbReference>
<dbReference type="FunFam" id="3.30.1390.20:FF:000001">
    <property type="entry name" value="50S ribosomal protein L30"/>
    <property type="match status" value="1"/>
</dbReference>
<dbReference type="Gene3D" id="3.30.1390.20">
    <property type="entry name" value="Ribosomal protein L30, ferredoxin-like fold domain"/>
    <property type="match status" value="1"/>
</dbReference>
<dbReference type="HAMAP" id="MF_01371_B">
    <property type="entry name" value="Ribosomal_uL30_B"/>
    <property type="match status" value="1"/>
</dbReference>
<dbReference type="InterPro" id="IPR036919">
    <property type="entry name" value="Ribo_uL30_ferredoxin-like_sf"/>
</dbReference>
<dbReference type="InterPro" id="IPR005996">
    <property type="entry name" value="Ribosomal_uL30_bac-type"/>
</dbReference>
<dbReference type="InterPro" id="IPR018038">
    <property type="entry name" value="Ribosomal_uL30_CS"/>
</dbReference>
<dbReference type="InterPro" id="IPR016082">
    <property type="entry name" value="Ribosomal_uL30_ferredoxin-like"/>
</dbReference>
<dbReference type="NCBIfam" id="TIGR01308">
    <property type="entry name" value="rpmD_bact"/>
    <property type="match status" value="1"/>
</dbReference>
<dbReference type="PANTHER" id="PTHR15892:SF2">
    <property type="entry name" value="LARGE RIBOSOMAL SUBUNIT PROTEIN UL30M"/>
    <property type="match status" value="1"/>
</dbReference>
<dbReference type="PANTHER" id="PTHR15892">
    <property type="entry name" value="MITOCHONDRIAL RIBOSOMAL PROTEIN L30"/>
    <property type="match status" value="1"/>
</dbReference>
<dbReference type="Pfam" id="PF00327">
    <property type="entry name" value="Ribosomal_L30"/>
    <property type="match status" value="1"/>
</dbReference>
<dbReference type="PIRSF" id="PIRSF002211">
    <property type="entry name" value="Ribosomal_L30_bac-type"/>
    <property type="match status" value="1"/>
</dbReference>
<dbReference type="SUPFAM" id="SSF55129">
    <property type="entry name" value="Ribosomal protein L30p/L7e"/>
    <property type="match status" value="1"/>
</dbReference>
<dbReference type="PROSITE" id="PS00634">
    <property type="entry name" value="RIBOSOMAL_L30"/>
    <property type="match status" value="1"/>
</dbReference>
<comment type="subunit">
    <text evidence="1">Part of the 50S ribosomal subunit.</text>
</comment>
<comment type="similarity">
    <text evidence="1">Belongs to the universal ribosomal protein uL30 family.</text>
</comment>
<keyword id="KW-1185">Reference proteome</keyword>
<keyword id="KW-0687">Ribonucleoprotein</keyword>
<keyword id="KW-0689">Ribosomal protein</keyword>